<organism>
    <name type="scientific">Bacillus thuringiensis subsp. kurstaki</name>
    <dbReference type="NCBI Taxonomy" id="29339"/>
    <lineage>
        <taxon>Bacteria</taxon>
        <taxon>Bacillati</taxon>
        <taxon>Bacillota</taxon>
        <taxon>Bacilli</taxon>
        <taxon>Bacillales</taxon>
        <taxon>Bacillaceae</taxon>
        <taxon>Bacillus</taxon>
        <taxon>Bacillus cereus group</taxon>
    </lineage>
</organism>
<geneLocation type="plasmid">
    <name>unnamed</name>
</geneLocation>
<protein>
    <recommendedName>
        <fullName>Uncharacterized 20 kDa protein in cryB1 5'region</fullName>
    </recommendedName>
    <alternativeName>
        <fullName>ORF1</fullName>
    </alternativeName>
</protein>
<accession>P21732</accession>
<name>YCR1_BACTK</name>
<feature type="chain" id="PRO_0000066177" description="Uncharacterized 20 kDa protein in cryB1 5'region">
    <location>
        <begin position="1"/>
        <end position="175"/>
    </location>
</feature>
<feature type="region of interest" description="Disordered" evidence="1">
    <location>
        <begin position="1"/>
        <end position="21"/>
    </location>
</feature>
<feature type="compositionally biased region" description="Basic and acidic residues" evidence="1">
    <location>
        <begin position="1"/>
        <end position="17"/>
    </location>
</feature>
<comment type="induction">
    <text evidence="3">Transcribed starting in early sporulation and into later stages; not expressed during vegetative growth. First gene in the orf1-orf2-cry2Aa (cryB1) operon.</text>
</comment>
<comment type="miscellaneous">
    <text evidence="2">Encoded on an unnamed 225 kb plasmid.</text>
</comment>
<proteinExistence type="evidence at transcript level"/>
<dbReference type="EMBL" id="M23723">
    <property type="protein sequence ID" value="AAA83514.1"/>
    <property type="molecule type" value="Genomic_DNA"/>
</dbReference>
<dbReference type="PIR" id="A32053">
    <property type="entry name" value="A32053"/>
</dbReference>
<dbReference type="InterPro" id="IPR009751">
    <property type="entry name" value="CryBP1"/>
</dbReference>
<dbReference type="Pfam" id="PF07029">
    <property type="entry name" value="CryBP1"/>
    <property type="match status" value="1"/>
</dbReference>
<reference key="1">
    <citation type="journal article" date="1989" name="J. Bacteriol.">
        <title>Two highly related insecticidal crystal proteins of Bacillus thuringiensis subsp. kurstaki possess different host range specificities.</title>
        <authorList>
            <person name="Widner W.R."/>
            <person name="Whiteley H.R."/>
        </authorList>
    </citation>
    <scope>NUCLEOTIDE SEQUENCE [GENOMIC DNA]</scope>
    <scope>INDUCTION</scope>
    <scope>OPERON</scope>
    <source>
        <strain>HD-1</strain>
    </source>
</reference>
<sequence length="175" mass="19980">MKVEGGESMHESEEGRDVPNGITKHKHHIPFQCIVSLPSGFQIEKPNDLKLVYDVSHLSMTKDTCKKRIEIDECGQVEIDLQVLKIKGVLSFIGNFSIEPIVCENMYTTVDRNPSISLSFQDTVYVDHILKYSVQQLPHYVIDGDHIQVRELQIKLMKENPQSAQISGLFCFVYE</sequence>
<evidence type="ECO:0000256" key="1">
    <source>
        <dbReference type="SAM" id="MobiDB-lite"/>
    </source>
</evidence>
<evidence type="ECO:0000269" key="2">
    <source>
    </source>
</evidence>
<evidence type="ECO:0000305" key="3">
    <source>
    </source>
</evidence>
<keyword id="KW-0614">Plasmid</keyword>